<name>FMT_STRA3</name>
<dbReference type="EC" id="2.1.2.9" evidence="1"/>
<dbReference type="EMBL" id="AL766844">
    <property type="protein sequence ID" value="CAD45949.1"/>
    <property type="molecule type" value="Genomic_DNA"/>
</dbReference>
<dbReference type="RefSeq" id="WP_000163893.1">
    <property type="nucleotide sequence ID" value="NC_004368.1"/>
</dbReference>
<dbReference type="SMR" id="P64137"/>
<dbReference type="GeneID" id="66885288"/>
<dbReference type="KEGG" id="san:fmt"/>
<dbReference type="eggNOG" id="COG0223">
    <property type="taxonomic scope" value="Bacteria"/>
</dbReference>
<dbReference type="HOGENOM" id="CLU_033347_1_1_9"/>
<dbReference type="Proteomes" id="UP000000823">
    <property type="component" value="Chromosome"/>
</dbReference>
<dbReference type="GO" id="GO:0005829">
    <property type="term" value="C:cytosol"/>
    <property type="evidence" value="ECO:0007669"/>
    <property type="project" value="TreeGrafter"/>
</dbReference>
<dbReference type="GO" id="GO:0004479">
    <property type="term" value="F:methionyl-tRNA formyltransferase activity"/>
    <property type="evidence" value="ECO:0007669"/>
    <property type="project" value="UniProtKB-UniRule"/>
</dbReference>
<dbReference type="CDD" id="cd08646">
    <property type="entry name" value="FMT_core_Met-tRNA-FMT_N"/>
    <property type="match status" value="1"/>
</dbReference>
<dbReference type="CDD" id="cd08704">
    <property type="entry name" value="Met_tRNA_FMT_C"/>
    <property type="match status" value="1"/>
</dbReference>
<dbReference type="FunFam" id="3.40.50.170:FF:000004">
    <property type="entry name" value="Methionyl-tRNA formyltransferase"/>
    <property type="match status" value="1"/>
</dbReference>
<dbReference type="Gene3D" id="3.10.25.10">
    <property type="entry name" value="Formyl transferase, C-terminal domain"/>
    <property type="match status" value="1"/>
</dbReference>
<dbReference type="Gene3D" id="3.40.50.170">
    <property type="entry name" value="Formyl transferase, N-terminal domain"/>
    <property type="match status" value="1"/>
</dbReference>
<dbReference type="HAMAP" id="MF_00182">
    <property type="entry name" value="Formyl_trans"/>
    <property type="match status" value="1"/>
</dbReference>
<dbReference type="InterPro" id="IPR005794">
    <property type="entry name" value="Fmt"/>
</dbReference>
<dbReference type="InterPro" id="IPR005793">
    <property type="entry name" value="Formyl_trans_C"/>
</dbReference>
<dbReference type="InterPro" id="IPR037022">
    <property type="entry name" value="Formyl_trans_C_sf"/>
</dbReference>
<dbReference type="InterPro" id="IPR002376">
    <property type="entry name" value="Formyl_transf_N"/>
</dbReference>
<dbReference type="InterPro" id="IPR036477">
    <property type="entry name" value="Formyl_transf_N_sf"/>
</dbReference>
<dbReference type="InterPro" id="IPR011034">
    <property type="entry name" value="Formyl_transferase-like_C_sf"/>
</dbReference>
<dbReference type="InterPro" id="IPR001555">
    <property type="entry name" value="GART_AS"/>
</dbReference>
<dbReference type="InterPro" id="IPR044135">
    <property type="entry name" value="Met-tRNA-FMT_C"/>
</dbReference>
<dbReference type="InterPro" id="IPR041711">
    <property type="entry name" value="Met-tRNA-FMT_N"/>
</dbReference>
<dbReference type="NCBIfam" id="TIGR00460">
    <property type="entry name" value="fmt"/>
    <property type="match status" value="1"/>
</dbReference>
<dbReference type="PANTHER" id="PTHR11138">
    <property type="entry name" value="METHIONYL-TRNA FORMYLTRANSFERASE"/>
    <property type="match status" value="1"/>
</dbReference>
<dbReference type="PANTHER" id="PTHR11138:SF5">
    <property type="entry name" value="METHIONYL-TRNA FORMYLTRANSFERASE, MITOCHONDRIAL"/>
    <property type="match status" value="1"/>
</dbReference>
<dbReference type="Pfam" id="PF02911">
    <property type="entry name" value="Formyl_trans_C"/>
    <property type="match status" value="1"/>
</dbReference>
<dbReference type="Pfam" id="PF00551">
    <property type="entry name" value="Formyl_trans_N"/>
    <property type="match status" value="1"/>
</dbReference>
<dbReference type="SUPFAM" id="SSF50486">
    <property type="entry name" value="FMT C-terminal domain-like"/>
    <property type="match status" value="1"/>
</dbReference>
<dbReference type="SUPFAM" id="SSF53328">
    <property type="entry name" value="Formyltransferase"/>
    <property type="match status" value="1"/>
</dbReference>
<dbReference type="PROSITE" id="PS00373">
    <property type="entry name" value="GART"/>
    <property type="match status" value="1"/>
</dbReference>
<proteinExistence type="inferred from homology"/>
<reference key="1">
    <citation type="journal article" date="2002" name="Mol. Microbiol.">
        <title>Genome sequence of Streptococcus agalactiae, a pathogen causing invasive neonatal disease.</title>
        <authorList>
            <person name="Glaser P."/>
            <person name="Rusniok C."/>
            <person name="Buchrieser C."/>
            <person name="Chevalier F."/>
            <person name="Frangeul L."/>
            <person name="Msadek T."/>
            <person name="Zouine M."/>
            <person name="Couve E."/>
            <person name="Lalioui L."/>
            <person name="Poyart C."/>
            <person name="Trieu-Cuot P."/>
            <person name="Kunst F."/>
        </authorList>
    </citation>
    <scope>NUCLEOTIDE SEQUENCE [LARGE SCALE GENOMIC DNA]</scope>
    <source>
        <strain>NEM316</strain>
    </source>
</reference>
<feature type="chain" id="PRO_0000083053" description="Methionyl-tRNA formyltransferase">
    <location>
        <begin position="1"/>
        <end position="311"/>
    </location>
</feature>
<feature type="binding site" evidence="1">
    <location>
        <begin position="110"/>
        <end position="113"/>
    </location>
    <ligand>
        <name>(6S)-5,6,7,8-tetrahydrofolate</name>
        <dbReference type="ChEBI" id="CHEBI:57453"/>
    </ligand>
</feature>
<keyword id="KW-0648">Protein biosynthesis</keyword>
<keyword id="KW-0808">Transferase</keyword>
<sequence length="311" mass="33808">MTKLLFMGTPDFSATVLKGILADGKYDVLAVVTQPDRAVGRKKEIKMTPVKEVALENNIPVYQPEKLSGSPELEQLMTLGADGIVTAAFGQFLPTKLLESVGFAINVHASLLPKYRGGAPIHYAIINGEKEAGVTIMEMVAKMDAGDMVSKASVEITDEDNVGTMFDRLAVVGRDLLLDTLPGYLSGDIKPIPQNEEEVSFSPNISPDEERIDWNKSSRDIFNHVRGMYPWPVAHTLLEGNRFKLYEVTMSEGKGSPGQVIAKTKNSLTVATGDGAIELKSVQPAGKPRMDIKDFLNGVGRNLEIGDKFGE</sequence>
<accession>P64137</accession>
<accession>Q8E1N8</accession>
<accession>Q8E754</accession>
<protein>
    <recommendedName>
        <fullName evidence="1">Methionyl-tRNA formyltransferase</fullName>
        <ecNumber evidence="1">2.1.2.9</ecNumber>
    </recommendedName>
</protein>
<comment type="function">
    <text evidence="1">Attaches a formyl group to the free amino group of methionyl-tRNA(fMet). The formyl group appears to play a dual role in the initiator identity of N-formylmethionyl-tRNA by promoting its recognition by IF2 and preventing the misappropriation of this tRNA by the elongation apparatus.</text>
</comment>
<comment type="catalytic activity">
    <reaction evidence="1">
        <text>L-methionyl-tRNA(fMet) + (6R)-10-formyltetrahydrofolate = N-formyl-L-methionyl-tRNA(fMet) + (6S)-5,6,7,8-tetrahydrofolate + H(+)</text>
        <dbReference type="Rhea" id="RHEA:24380"/>
        <dbReference type="Rhea" id="RHEA-COMP:9952"/>
        <dbReference type="Rhea" id="RHEA-COMP:9953"/>
        <dbReference type="ChEBI" id="CHEBI:15378"/>
        <dbReference type="ChEBI" id="CHEBI:57453"/>
        <dbReference type="ChEBI" id="CHEBI:78530"/>
        <dbReference type="ChEBI" id="CHEBI:78844"/>
        <dbReference type="ChEBI" id="CHEBI:195366"/>
        <dbReference type="EC" id="2.1.2.9"/>
    </reaction>
</comment>
<comment type="similarity">
    <text evidence="1">Belongs to the Fmt family.</text>
</comment>
<organism>
    <name type="scientific">Streptococcus agalactiae serotype III (strain NEM316)</name>
    <dbReference type="NCBI Taxonomy" id="211110"/>
    <lineage>
        <taxon>Bacteria</taxon>
        <taxon>Bacillati</taxon>
        <taxon>Bacillota</taxon>
        <taxon>Bacilli</taxon>
        <taxon>Lactobacillales</taxon>
        <taxon>Streptococcaceae</taxon>
        <taxon>Streptococcus</taxon>
    </lineage>
</organism>
<evidence type="ECO:0000255" key="1">
    <source>
        <dbReference type="HAMAP-Rule" id="MF_00182"/>
    </source>
</evidence>
<gene>
    <name evidence="1" type="primary">fmt</name>
    <name type="ordered locus">gbs0304</name>
</gene>